<reference key="1">
    <citation type="journal article" date="2004" name="J. Mol. Microbiol. Biotechnol.">
        <title>The complete genome sequence of Bacillus licheniformis DSM13, an organism with great industrial potential.</title>
        <authorList>
            <person name="Veith B."/>
            <person name="Herzberg C."/>
            <person name="Steckel S."/>
            <person name="Feesche J."/>
            <person name="Maurer K.H."/>
            <person name="Ehrenreich P."/>
            <person name="Baeumer S."/>
            <person name="Henne A."/>
            <person name="Liesegang H."/>
            <person name="Merkl R."/>
            <person name="Ehrenreich A."/>
            <person name="Gottschalk G."/>
        </authorList>
    </citation>
    <scope>NUCLEOTIDE SEQUENCE [LARGE SCALE GENOMIC DNA]</scope>
    <source>
        <strain>ATCC 14580 / DSM 13 / JCM 2505 / CCUG 7422 / NBRC 12200 / NCIMB 9375 / NCTC 10341 / NRRL NRS-1264 / Gibson 46</strain>
    </source>
</reference>
<reference key="2">
    <citation type="journal article" date="2004" name="Genome Biol.">
        <title>Complete genome sequence of the industrial bacterium Bacillus licheniformis and comparisons with closely related Bacillus species.</title>
        <authorList>
            <person name="Rey M.W."/>
            <person name="Ramaiya P."/>
            <person name="Nelson B.A."/>
            <person name="Brody-Karpin S.D."/>
            <person name="Zaretsky E.J."/>
            <person name="Tang M."/>
            <person name="Lopez de Leon A."/>
            <person name="Xiang H."/>
            <person name="Gusti V."/>
            <person name="Clausen I.G."/>
            <person name="Olsen P.B."/>
            <person name="Rasmussen M.D."/>
            <person name="Andersen J.T."/>
            <person name="Joergensen P.L."/>
            <person name="Larsen T.S."/>
            <person name="Sorokin A."/>
            <person name="Bolotin A."/>
            <person name="Lapidus A."/>
            <person name="Galleron N."/>
            <person name="Ehrlich S.D."/>
            <person name="Berka R.M."/>
        </authorList>
    </citation>
    <scope>NUCLEOTIDE SEQUENCE [LARGE SCALE GENOMIC DNA]</scope>
    <source>
        <strain>ATCC 14580 / DSM 13 / JCM 2505 / CCUG 7422 / NBRC 12200 / NCIMB 9375 / NCTC 10341 / NRRL NRS-1264 / Gibson 46</strain>
    </source>
</reference>
<gene>
    <name evidence="1" type="primary">ribH</name>
    <name type="ordered locus">BLi02472</name>
    <name type="ordered locus">BL01888</name>
</gene>
<name>RISB_BACLD</name>
<accession>Q65HW7</accession>
<accession>Q62TB6</accession>
<evidence type="ECO:0000255" key="1">
    <source>
        <dbReference type="HAMAP-Rule" id="MF_00178"/>
    </source>
</evidence>
<feature type="chain" id="PRO_1000040370" description="6,7-dimethyl-8-ribityllumazine synthase">
    <location>
        <begin position="1"/>
        <end position="154"/>
    </location>
</feature>
<feature type="active site" description="Proton donor" evidence="1">
    <location>
        <position position="88"/>
    </location>
</feature>
<feature type="binding site" evidence="1">
    <location>
        <position position="22"/>
    </location>
    <ligand>
        <name>5-amino-6-(D-ribitylamino)uracil</name>
        <dbReference type="ChEBI" id="CHEBI:15934"/>
    </ligand>
</feature>
<feature type="binding site" evidence="1">
    <location>
        <begin position="56"/>
        <end position="58"/>
    </location>
    <ligand>
        <name>5-amino-6-(D-ribitylamino)uracil</name>
        <dbReference type="ChEBI" id="CHEBI:15934"/>
    </ligand>
</feature>
<feature type="binding site" evidence="1">
    <location>
        <begin position="80"/>
        <end position="82"/>
    </location>
    <ligand>
        <name>5-amino-6-(D-ribitylamino)uracil</name>
        <dbReference type="ChEBI" id="CHEBI:15934"/>
    </ligand>
</feature>
<feature type="binding site" evidence="1">
    <location>
        <begin position="85"/>
        <end position="86"/>
    </location>
    <ligand>
        <name>(2S)-2-hydroxy-3-oxobutyl phosphate</name>
        <dbReference type="ChEBI" id="CHEBI:58830"/>
    </ligand>
</feature>
<feature type="binding site" evidence="1">
    <location>
        <position position="113"/>
    </location>
    <ligand>
        <name>5-amino-6-(D-ribitylamino)uracil</name>
        <dbReference type="ChEBI" id="CHEBI:15934"/>
    </ligand>
</feature>
<feature type="binding site" evidence="1">
    <location>
        <position position="127"/>
    </location>
    <ligand>
        <name>(2S)-2-hydroxy-3-oxobutyl phosphate</name>
        <dbReference type="ChEBI" id="CHEBI:58830"/>
    </ligand>
</feature>
<proteinExistence type="inferred from homology"/>
<protein>
    <recommendedName>
        <fullName evidence="1">6,7-dimethyl-8-ribityllumazine synthase</fullName>
        <shortName evidence="1">DMRL synthase</shortName>
        <shortName evidence="1">LS</shortName>
        <shortName evidence="1">Lumazine synthase</shortName>
        <ecNumber evidence="1">2.5.1.78</ecNumber>
    </recommendedName>
</protein>
<comment type="function">
    <text evidence="1">Catalyzes the formation of 6,7-dimethyl-8-ribityllumazine by condensation of 5-amino-6-(D-ribitylamino)uracil with 3,4-dihydroxy-2-butanone 4-phosphate. This is the penultimate step in the biosynthesis of riboflavin.</text>
</comment>
<comment type="catalytic activity">
    <reaction evidence="1">
        <text>(2S)-2-hydroxy-3-oxobutyl phosphate + 5-amino-6-(D-ribitylamino)uracil = 6,7-dimethyl-8-(1-D-ribityl)lumazine + phosphate + 2 H2O + H(+)</text>
        <dbReference type="Rhea" id="RHEA:26152"/>
        <dbReference type="ChEBI" id="CHEBI:15377"/>
        <dbReference type="ChEBI" id="CHEBI:15378"/>
        <dbReference type="ChEBI" id="CHEBI:15934"/>
        <dbReference type="ChEBI" id="CHEBI:43474"/>
        <dbReference type="ChEBI" id="CHEBI:58201"/>
        <dbReference type="ChEBI" id="CHEBI:58830"/>
        <dbReference type="EC" id="2.5.1.78"/>
    </reaction>
</comment>
<comment type="pathway">
    <text evidence="1">Cofactor biosynthesis; riboflavin biosynthesis; riboflavin from 2-hydroxy-3-oxobutyl phosphate and 5-amino-6-(D-ribitylamino)uracil: step 1/2.</text>
</comment>
<comment type="subunit">
    <text evidence="1">Forms an icosahedral capsid composed of 60 subunits, arranged as a dodecamer of pentamers.</text>
</comment>
<comment type="similarity">
    <text evidence="1">Belongs to the DMRL synthase family.</text>
</comment>
<keyword id="KW-1185">Reference proteome</keyword>
<keyword id="KW-0686">Riboflavin biosynthesis</keyword>
<keyword id="KW-0808">Transferase</keyword>
<dbReference type="EC" id="2.5.1.78" evidence="1"/>
<dbReference type="EMBL" id="CP000002">
    <property type="protein sequence ID" value="AAU23993.1"/>
    <property type="molecule type" value="Genomic_DNA"/>
</dbReference>
<dbReference type="EMBL" id="AE017333">
    <property type="protein sequence ID" value="AAU41347.1"/>
    <property type="molecule type" value="Genomic_DNA"/>
</dbReference>
<dbReference type="SMR" id="Q65HW7"/>
<dbReference type="STRING" id="279010.BL01888"/>
<dbReference type="KEGG" id="bld:BLi02472"/>
<dbReference type="KEGG" id="bli:BL01888"/>
<dbReference type="eggNOG" id="COG0054">
    <property type="taxonomic scope" value="Bacteria"/>
</dbReference>
<dbReference type="HOGENOM" id="CLU_089358_1_1_9"/>
<dbReference type="UniPathway" id="UPA00275">
    <property type="reaction ID" value="UER00404"/>
</dbReference>
<dbReference type="Proteomes" id="UP000000606">
    <property type="component" value="Chromosome"/>
</dbReference>
<dbReference type="GO" id="GO:0005829">
    <property type="term" value="C:cytosol"/>
    <property type="evidence" value="ECO:0007669"/>
    <property type="project" value="TreeGrafter"/>
</dbReference>
<dbReference type="GO" id="GO:0009349">
    <property type="term" value="C:riboflavin synthase complex"/>
    <property type="evidence" value="ECO:0007669"/>
    <property type="project" value="InterPro"/>
</dbReference>
<dbReference type="GO" id="GO:0000906">
    <property type="term" value="F:6,7-dimethyl-8-ribityllumazine synthase activity"/>
    <property type="evidence" value="ECO:0007669"/>
    <property type="project" value="UniProtKB-UniRule"/>
</dbReference>
<dbReference type="GO" id="GO:0009231">
    <property type="term" value="P:riboflavin biosynthetic process"/>
    <property type="evidence" value="ECO:0007669"/>
    <property type="project" value="UniProtKB-UniRule"/>
</dbReference>
<dbReference type="CDD" id="cd09209">
    <property type="entry name" value="Lumazine_synthase-I"/>
    <property type="match status" value="1"/>
</dbReference>
<dbReference type="FunFam" id="3.40.50.960:FF:000001">
    <property type="entry name" value="6,7-dimethyl-8-ribityllumazine synthase"/>
    <property type="match status" value="1"/>
</dbReference>
<dbReference type="Gene3D" id="3.40.50.960">
    <property type="entry name" value="Lumazine/riboflavin synthase"/>
    <property type="match status" value="1"/>
</dbReference>
<dbReference type="HAMAP" id="MF_00178">
    <property type="entry name" value="Lumazine_synth"/>
    <property type="match status" value="1"/>
</dbReference>
<dbReference type="InterPro" id="IPR034964">
    <property type="entry name" value="LS"/>
</dbReference>
<dbReference type="InterPro" id="IPR002180">
    <property type="entry name" value="LS/RS"/>
</dbReference>
<dbReference type="InterPro" id="IPR036467">
    <property type="entry name" value="LS/RS_sf"/>
</dbReference>
<dbReference type="NCBIfam" id="TIGR00114">
    <property type="entry name" value="lumazine-synth"/>
    <property type="match status" value="1"/>
</dbReference>
<dbReference type="NCBIfam" id="NF000812">
    <property type="entry name" value="PRK00061.1-4"/>
    <property type="match status" value="1"/>
</dbReference>
<dbReference type="PANTHER" id="PTHR21058:SF0">
    <property type="entry name" value="6,7-DIMETHYL-8-RIBITYLLUMAZINE SYNTHASE"/>
    <property type="match status" value="1"/>
</dbReference>
<dbReference type="PANTHER" id="PTHR21058">
    <property type="entry name" value="6,7-DIMETHYL-8-RIBITYLLUMAZINE SYNTHASE DMRL SYNTHASE LUMAZINE SYNTHASE"/>
    <property type="match status" value="1"/>
</dbReference>
<dbReference type="Pfam" id="PF00885">
    <property type="entry name" value="DMRL_synthase"/>
    <property type="match status" value="1"/>
</dbReference>
<dbReference type="SUPFAM" id="SSF52121">
    <property type="entry name" value="Lumazine synthase"/>
    <property type="match status" value="1"/>
</dbReference>
<sequence>MNKIEGHVIGTDLKIGIVVSRFNDFITSKLLSGAEDTLLRHGVKADDIDVAWVPGAFEIPLIAKKMAETKKYDAVITLGTVIRGATSHYDYVCNEAAKGIAASSMSTGVPVIFGVLTTDTIEQAVERAGTKAGNKGAEAAAAAIEMANLTRSLQ</sequence>
<organism>
    <name type="scientific">Bacillus licheniformis (strain ATCC 14580 / DSM 13 / JCM 2505 / CCUG 7422 / NBRC 12200 / NCIMB 9375 / NCTC 10341 / NRRL NRS-1264 / Gibson 46)</name>
    <dbReference type="NCBI Taxonomy" id="279010"/>
    <lineage>
        <taxon>Bacteria</taxon>
        <taxon>Bacillati</taxon>
        <taxon>Bacillota</taxon>
        <taxon>Bacilli</taxon>
        <taxon>Bacillales</taxon>
        <taxon>Bacillaceae</taxon>
        <taxon>Bacillus</taxon>
    </lineage>
</organism>